<comment type="function">
    <text evidence="1">P-II indirectly controls the transcription of the glutamine synthetase gene (GlnA). P-II prevents NR-II-catalyzed conversion of NR-I to NR-I-phosphate, the transcriptional activator of GlnA. When P-II is uridylylated to P-II-UMP, these events are reversed. When the ratio of Gln to 2-ketoglutarate decreases, P-II is uridylylated to P-II-UMP, which causes the deadenylation of glutamine synthetase by GlnE, so activating the enzyme (By similarity).</text>
</comment>
<comment type="subunit">
    <text evidence="1">Homotrimer.</text>
</comment>
<comment type="PTM">
    <text evidence="1">Uridylylated/deuridylylated by GlnD.</text>
</comment>
<comment type="similarity">
    <text evidence="2">Belongs to the P(II) protein family.</text>
</comment>
<gene>
    <name type="primary">glnB</name>
    <name type="ordered locus">HI_0337</name>
</gene>
<reference key="1">
    <citation type="journal article" date="1995" name="Science">
        <title>Whole-genome random sequencing and assembly of Haemophilus influenzae Rd.</title>
        <authorList>
            <person name="Fleischmann R.D."/>
            <person name="Adams M.D."/>
            <person name="White O."/>
            <person name="Clayton R.A."/>
            <person name="Kirkness E.F."/>
            <person name="Kerlavage A.R."/>
            <person name="Bult C.J."/>
            <person name="Tomb J.-F."/>
            <person name="Dougherty B.A."/>
            <person name="Merrick J.M."/>
            <person name="McKenney K."/>
            <person name="Sutton G.G."/>
            <person name="FitzHugh W."/>
            <person name="Fields C.A."/>
            <person name="Gocayne J.D."/>
            <person name="Scott J.D."/>
            <person name="Shirley R."/>
            <person name="Liu L.-I."/>
            <person name="Glodek A."/>
            <person name="Kelley J.M."/>
            <person name="Weidman J.F."/>
            <person name="Phillips C.A."/>
            <person name="Spriggs T."/>
            <person name="Hedblom E."/>
            <person name="Cotton M.D."/>
            <person name="Utterback T.R."/>
            <person name="Hanna M.C."/>
            <person name="Nguyen D.T."/>
            <person name="Saudek D.M."/>
            <person name="Brandon R.C."/>
            <person name="Fine L.D."/>
            <person name="Fritchman J.L."/>
            <person name="Fuhrmann J.L."/>
            <person name="Geoghagen N.S.M."/>
            <person name="Gnehm C.L."/>
            <person name="McDonald L.A."/>
            <person name="Small K.V."/>
            <person name="Fraser C.M."/>
            <person name="Smith H.O."/>
            <person name="Venter J.C."/>
        </authorList>
    </citation>
    <scope>NUCLEOTIDE SEQUENCE [LARGE SCALE GENOMIC DNA]</scope>
    <source>
        <strain>ATCC 51907 / DSM 11121 / KW20 / Rd</strain>
    </source>
</reference>
<evidence type="ECO:0000250" key="1"/>
<evidence type="ECO:0000255" key="2">
    <source>
        <dbReference type="PROSITE-ProRule" id="PRU00675"/>
    </source>
</evidence>
<sequence>MKKIEAMIKPFKLDDVRESLSDIGISGMTITEVRGFGRQKGHTELYRGAEYMVDFLPKVKLEVVVPDELVDQCIEAIIETAQTGKIGDGKIFVYHVERAIRIRTGEENEDAI</sequence>
<proteinExistence type="inferred from homology"/>
<organism>
    <name type="scientific">Haemophilus influenzae (strain ATCC 51907 / DSM 11121 / KW20 / Rd)</name>
    <dbReference type="NCBI Taxonomy" id="71421"/>
    <lineage>
        <taxon>Bacteria</taxon>
        <taxon>Pseudomonadati</taxon>
        <taxon>Pseudomonadota</taxon>
        <taxon>Gammaproteobacteria</taxon>
        <taxon>Pasteurellales</taxon>
        <taxon>Pasteurellaceae</taxon>
        <taxon>Haemophilus</taxon>
    </lineage>
</organism>
<dbReference type="EMBL" id="L42023">
    <property type="protein sequence ID" value="AAC21999.1"/>
    <property type="molecule type" value="Genomic_DNA"/>
</dbReference>
<dbReference type="PIR" id="F64062">
    <property type="entry name" value="F64062"/>
</dbReference>
<dbReference type="RefSeq" id="NP_438501.1">
    <property type="nucleotide sequence ID" value="NC_000907.1"/>
</dbReference>
<dbReference type="SMR" id="P43795"/>
<dbReference type="STRING" id="71421.HI_0337"/>
<dbReference type="EnsemblBacteria" id="AAC21999">
    <property type="protein sequence ID" value="AAC21999"/>
    <property type="gene ID" value="HI_0337"/>
</dbReference>
<dbReference type="KEGG" id="hin:HI_0337"/>
<dbReference type="PATRIC" id="fig|71421.8.peg.354"/>
<dbReference type="eggNOG" id="COG0347">
    <property type="taxonomic scope" value="Bacteria"/>
</dbReference>
<dbReference type="HOGENOM" id="CLU_082268_0_0_6"/>
<dbReference type="OrthoDB" id="9802729at2"/>
<dbReference type="PhylomeDB" id="P43795"/>
<dbReference type="BioCyc" id="HINF71421:G1GJ1-353-MONOMER"/>
<dbReference type="Proteomes" id="UP000000579">
    <property type="component" value="Chromosome"/>
</dbReference>
<dbReference type="GO" id="GO:0005829">
    <property type="term" value="C:cytosol"/>
    <property type="evidence" value="ECO:0000318"/>
    <property type="project" value="GO_Central"/>
</dbReference>
<dbReference type="GO" id="GO:0005524">
    <property type="term" value="F:ATP binding"/>
    <property type="evidence" value="ECO:0000318"/>
    <property type="project" value="GO_Central"/>
</dbReference>
<dbReference type="GO" id="GO:0030234">
    <property type="term" value="F:enzyme regulator activity"/>
    <property type="evidence" value="ECO:0000318"/>
    <property type="project" value="GO_Central"/>
</dbReference>
<dbReference type="GO" id="GO:0006808">
    <property type="term" value="P:regulation of nitrogen utilization"/>
    <property type="evidence" value="ECO:0000318"/>
    <property type="project" value="GO_Central"/>
</dbReference>
<dbReference type="FunFam" id="3.30.70.120:FF:000001">
    <property type="entry name" value="Nitrogen regulatory protein P-II"/>
    <property type="match status" value="1"/>
</dbReference>
<dbReference type="Gene3D" id="3.30.70.120">
    <property type="match status" value="1"/>
</dbReference>
<dbReference type="InterPro" id="IPR002187">
    <property type="entry name" value="N-reg_PII"/>
</dbReference>
<dbReference type="InterPro" id="IPR011322">
    <property type="entry name" value="N-reg_PII-like_a/b"/>
</dbReference>
<dbReference type="InterPro" id="IPR015867">
    <property type="entry name" value="N-reg_PII/ATP_PRibTrfase_C"/>
</dbReference>
<dbReference type="InterPro" id="IPR017918">
    <property type="entry name" value="N-reg_PII_CS"/>
</dbReference>
<dbReference type="InterPro" id="IPR002332">
    <property type="entry name" value="N-reg_PII_urydylation_site"/>
</dbReference>
<dbReference type="NCBIfam" id="NF008111">
    <property type="entry name" value="PRK10858.1"/>
    <property type="match status" value="1"/>
</dbReference>
<dbReference type="PANTHER" id="PTHR30115">
    <property type="entry name" value="NITROGEN REGULATORY PROTEIN P-II"/>
    <property type="match status" value="1"/>
</dbReference>
<dbReference type="PANTHER" id="PTHR30115:SF11">
    <property type="entry name" value="NITROGEN REGULATORY PROTEIN P-II HOMOLOG"/>
    <property type="match status" value="1"/>
</dbReference>
<dbReference type="Pfam" id="PF00543">
    <property type="entry name" value="P-II"/>
    <property type="match status" value="1"/>
</dbReference>
<dbReference type="PIRSF" id="PIRSF039144">
    <property type="entry name" value="GlnB"/>
    <property type="match status" value="1"/>
</dbReference>
<dbReference type="PRINTS" id="PR00340">
    <property type="entry name" value="PIIGLNB"/>
</dbReference>
<dbReference type="SMART" id="SM00938">
    <property type="entry name" value="P-II"/>
    <property type="match status" value="1"/>
</dbReference>
<dbReference type="SUPFAM" id="SSF54913">
    <property type="entry name" value="GlnB-like"/>
    <property type="match status" value="1"/>
</dbReference>
<dbReference type="PROSITE" id="PS00638">
    <property type="entry name" value="PII_GLNB_CTER"/>
    <property type="match status" value="1"/>
</dbReference>
<dbReference type="PROSITE" id="PS51343">
    <property type="entry name" value="PII_GLNB_DOM"/>
    <property type="match status" value="1"/>
</dbReference>
<dbReference type="PROSITE" id="PS00496">
    <property type="entry name" value="PII_GLNB_UMP"/>
    <property type="match status" value="1"/>
</dbReference>
<keyword id="KW-0547">Nucleotide-binding</keyword>
<keyword id="KW-0597">Phosphoprotein</keyword>
<keyword id="KW-1185">Reference proteome</keyword>
<keyword id="KW-0804">Transcription</keyword>
<keyword id="KW-0805">Transcription regulation</keyword>
<name>GLNB_HAEIN</name>
<protein>
    <recommendedName>
        <fullName>Nitrogen regulatory protein P-II</fullName>
    </recommendedName>
</protein>
<feature type="chain" id="PRO_0000139777" description="Nitrogen regulatory protein P-II">
    <location>
        <begin position="1"/>
        <end position="112"/>
    </location>
</feature>
<feature type="modified residue" description="O-UMP-tyrosine" evidence="2">
    <location>
        <position position="51"/>
    </location>
</feature>
<accession>P43795</accession>